<protein>
    <recommendedName>
        <fullName evidence="1">Large ribosomal subunit protein bL21</fullName>
    </recommendedName>
    <alternativeName>
        <fullName evidence="2">50S ribosomal protein L21</fullName>
    </alternativeName>
</protein>
<organism>
    <name type="scientific">Bifidobacterium longum (strain DJO10A)</name>
    <dbReference type="NCBI Taxonomy" id="205913"/>
    <lineage>
        <taxon>Bacteria</taxon>
        <taxon>Bacillati</taxon>
        <taxon>Actinomycetota</taxon>
        <taxon>Actinomycetes</taxon>
        <taxon>Bifidobacteriales</taxon>
        <taxon>Bifidobacteriaceae</taxon>
        <taxon>Bifidobacterium</taxon>
    </lineage>
</organism>
<gene>
    <name evidence="1" type="primary">rplU</name>
    <name type="ordered locus">BLD_1616</name>
</gene>
<dbReference type="EMBL" id="CP000605">
    <property type="protein sequence ID" value="ACD99061.1"/>
    <property type="molecule type" value="Genomic_DNA"/>
</dbReference>
<dbReference type="RefSeq" id="WP_007053062.1">
    <property type="nucleotide sequence ID" value="NC_010816.1"/>
</dbReference>
<dbReference type="SMR" id="B3DPK2"/>
<dbReference type="GeneID" id="69578970"/>
<dbReference type="KEGG" id="blj:BLD_1616"/>
<dbReference type="HOGENOM" id="CLU_061463_3_0_11"/>
<dbReference type="Proteomes" id="UP000002419">
    <property type="component" value="Chromosome"/>
</dbReference>
<dbReference type="GO" id="GO:0005737">
    <property type="term" value="C:cytoplasm"/>
    <property type="evidence" value="ECO:0007669"/>
    <property type="project" value="UniProtKB-ARBA"/>
</dbReference>
<dbReference type="GO" id="GO:1990904">
    <property type="term" value="C:ribonucleoprotein complex"/>
    <property type="evidence" value="ECO:0007669"/>
    <property type="project" value="UniProtKB-KW"/>
</dbReference>
<dbReference type="GO" id="GO:0005840">
    <property type="term" value="C:ribosome"/>
    <property type="evidence" value="ECO:0007669"/>
    <property type="project" value="UniProtKB-KW"/>
</dbReference>
<dbReference type="GO" id="GO:0019843">
    <property type="term" value="F:rRNA binding"/>
    <property type="evidence" value="ECO:0007669"/>
    <property type="project" value="UniProtKB-UniRule"/>
</dbReference>
<dbReference type="GO" id="GO:0003735">
    <property type="term" value="F:structural constituent of ribosome"/>
    <property type="evidence" value="ECO:0007669"/>
    <property type="project" value="InterPro"/>
</dbReference>
<dbReference type="GO" id="GO:0006412">
    <property type="term" value="P:translation"/>
    <property type="evidence" value="ECO:0007669"/>
    <property type="project" value="UniProtKB-UniRule"/>
</dbReference>
<dbReference type="HAMAP" id="MF_01363">
    <property type="entry name" value="Ribosomal_bL21"/>
    <property type="match status" value="1"/>
</dbReference>
<dbReference type="InterPro" id="IPR028909">
    <property type="entry name" value="bL21-like"/>
</dbReference>
<dbReference type="InterPro" id="IPR036164">
    <property type="entry name" value="bL21-like_sf"/>
</dbReference>
<dbReference type="InterPro" id="IPR001787">
    <property type="entry name" value="Ribosomal_bL21"/>
</dbReference>
<dbReference type="InterPro" id="IPR018258">
    <property type="entry name" value="Ribosomal_bL21_CS"/>
</dbReference>
<dbReference type="NCBIfam" id="TIGR00061">
    <property type="entry name" value="L21"/>
    <property type="match status" value="1"/>
</dbReference>
<dbReference type="PANTHER" id="PTHR21349">
    <property type="entry name" value="50S RIBOSOMAL PROTEIN L21"/>
    <property type="match status" value="1"/>
</dbReference>
<dbReference type="PANTHER" id="PTHR21349:SF0">
    <property type="entry name" value="LARGE RIBOSOMAL SUBUNIT PROTEIN BL21M"/>
    <property type="match status" value="1"/>
</dbReference>
<dbReference type="Pfam" id="PF00829">
    <property type="entry name" value="Ribosomal_L21p"/>
    <property type="match status" value="1"/>
</dbReference>
<dbReference type="SUPFAM" id="SSF141091">
    <property type="entry name" value="L21p-like"/>
    <property type="match status" value="1"/>
</dbReference>
<dbReference type="PROSITE" id="PS01169">
    <property type="entry name" value="RIBOSOMAL_L21"/>
    <property type="match status" value="1"/>
</dbReference>
<evidence type="ECO:0000255" key="1">
    <source>
        <dbReference type="HAMAP-Rule" id="MF_01363"/>
    </source>
</evidence>
<evidence type="ECO:0000305" key="2"/>
<comment type="function">
    <text evidence="1">This protein binds to 23S rRNA in the presence of protein L20.</text>
</comment>
<comment type="subunit">
    <text evidence="1">Part of the 50S ribosomal subunit. Contacts protein L20.</text>
</comment>
<comment type="similarity">
    <text evidence="1">Belongs to the bacterial ribosomal protein bL21 family.</text>
</comment>
<name>RL21_BIFLD</name>
<sequence>MYAIVKAGGHQEKVEVGDVILVNRLDAKKGDTVEFPVSLVVDGDKVTLAAADLAKVSVKAEVVNDEAKGPKISIQKYKNKTGVARRKGHRQKLTIVKITAIA</sequence>
<keyword id="KW-0687">Ribonucleoprotein</keyword>
<keyword id="KW-0689">Ribosomal protein</keyword>
<keyword id="KW-0694">RNA-binding</keyword>
<keyword id="KW-0699">rRNA-binding</keyword>
<reference key="1">
    <citation type="journal article" date="2008" name="BMC Genomics">
        <title>Comparative genomic analysis of the gut bacterium Bifidobacterium longum reveals loci susceptible to deletion during pure culture growth.</title>
        <authorList>
            <person name="Lee J.H."/>
            <person name="Karamychev V.N."/>
            <person name="Kozyavkin S.A."/>
            <person name="Mills D."/>
            <person name="Pavlov A.R."/>
            <person name="Pavlova N.V."/>
            <person name="Polouchine N.N."/>
            <person name="Richardson P.M."/>
            <person name="Shakhova V.V."/>
            <person name="Slesarev A.I."/>
            <person name="Weimer B."/>
            <person name="O'Sullivan D.J."/>
        </authorList>
    </citation>
    <scope>NUCLEOTIDE SEQUENCE [LARGE SCALE GENOMIC DNA]</scope>
    <source>
        <strain>DJO10A</strain>
    </source>
</reference>
<proteinExistence type="inferred from homology"/>
<feature type="chain" id="PRO_1000143759" description="Large ribosomal subunit protein bL21">
    <location>
        <begin position="1"/>
        <end position="102"/>
    </location>
</feature>
<accession>B3DPK2</accession>